<evidence type="ECO:0000255" key="1">
    <source>
        <dbReference type="HAMAP-Rule" id="MF_00169"/>
    </source>
</evidence>
<feature type="chain" id="PRO_1000023487" description="3-dehydroquinate dehydratase">
    <location>
        <begin position="1"/>
        <end position="147"/>
    </location>
</feature>
<feature type="active site" description="Proton acceptor" evidence="1">
    <location>
        <position position="25"/>
    </location>
</feature>
<feature type="active site" description="Proton donor" evidence="1">
    <location>
        <position position="102"/>
    </location>
</feature>
<feature type="binding site" evidence="1">
    <location>
        <position position="76"/>
    </location>
    <ligand>
        <name>substrate</name>
    </ligand>
</feature>
<feature type="binding site" evidence="1">
    <location>
        <position position="82"/>
    </location>
    <ligand>
        <name>substrate</name>
    </ligand>
</feature>
<feature type="binding site" evidence="1">
    <location>
        <position position="89"/>
    </location>
    <ligand>
        <name>substrate</name>
    </ligand>
</feature>
<feature type="binding site" evidence="1">
    <location>
        <begin position="103"/>
        <end position="104"/>
    </location>
    <ligand>
        <name>substrate</name>
    </ligand>
</feature>
<feature type="binding site" evidence="1">
    <location>
        <position position="113"/>
    </location>
    <ligand>
        <name>substrate</name>
    </ligand>
</feature>
<feature type="site" description="Transition state stabilizer" evidence="1">
    <location>
        <position position="20"/>
    </location>
</feature>
<comment type="function">
    <text evidence="1">Catalyzes a trans-dehydration via an enolate intermediate.</text>
</comment>
<comment type="catalytic activity">
    <reaction evidence="1">
        <text>3-dehydroquinate = 3-dehydroshikimate + H2O</text>
        <dbReference type="Rhea" id="RHEA:21096"/>
        <dbReference type="ChEBI" id="CHEBI:15377"/>
        <dbReference type="ChEBI" id="CHEBI:16630"/>
        <dbReference type="ChEBI" id="CHEBI:32364"/>
        <dbReference type="EC" id="4.2.1.10"/>
    </reaction>
</comment>
<comment type="pathway">
    <text evidence="1">Metabolic intermediate biosynthesis; chorismate biosynthesis; chorismate from D-erythrose 4-phosphate and phosphoenolpyruvate: step 3/7.</text>
</comment>
<comment type="subunit">
    <text evidence="1">Homododecamer.</text>
</comment>
<comment type="similarity">
    <text evidence="1">Belongs to the type-II 3-dehydroquinase family.</text>
</comment>
<protein>
    <recommendedName>
        <fullName evidence="1">3-dehydroquinate dehydratase</fullName>
        <shortName evidence="1">3-dehydroquinase</shortName>
        <ecNumber evidence="1">4.2.1.10</ecNumber>
    </recommendedName>
    <alternativeName>
        <fullName evidence="1">Type II DHQase</fullName>
    </alternativeName>
</protein>
<accession>A1KLN4</accession>
<organism>
    <name type="scientific">Mycobacterium bovis (strain BCG / Pasteur 1173P2)</name>
    <dbReference type="NCBI Taxonomy" id="410289"/>
    <lineage>
        <taxon>Bacteria</taxon>
        <taxon>Bacillati</taxon>
        <taxon>Actinomycetota</taxon>
        <taxon>Actinomycetes</taxon>
        <taxon>Mycobacteriales</taxon>
        <taxon>Mycobacteriaceae</taxon>
        <taxon>Mycobacterium</taxon>
        <taxon>Mycobacterium tuberculosis complex</taxon>
    </lineage>
</organism>
<sequence>MSELIVNVINGPNLGRLGRREPAVYGGTTHDELVALIEREAAELGLKAVVRQSDSEAQLLDWIHQAADAAEPVILNAGGLTHTSVALRDACAELSAPLIEVHISNVHAREEFRRHSYLSPIATGVIVGLGIQGYLLALRYLAEHVGT</sequence>
<proteinExistence type="inferred from homology"/>
<name>AROQ_MYCBP</name>
<reference key="1">
    <citation type="journal article" date="2007" name="Proc. Natl. Acad. Sci. U.S.A.">
        <title>Genome plasticity of BCG and impact on vaccine efficacy.</title>
        <authorList>
            <person name="Brosch R."/>
            <person name="Gordon S.V."/>
            <person name="Garnier T."/>
            <person name="Eiglmeier K."/>
            <person name="Frigui W."/>
            <person name="Valenti P."/>
            <person name="Dos Santos S."/>
            <person name="Duthoy S."/>
            <person name="Lacroix C."/>
            <person name="Garcia-Pelayo C."/>
            <person name="Inwald J.K."/>
            <person name="Golby P."/>
            <person name="Garcia J.N."/>
            <person name="Hewinson R.G."/>
            <person name="Behr M.A."/>
            <person name="Quail M.A."/>
            <person name="Churcher C."/>
            <person name="Barrell B.G."/>
            <person name="Parkhill J."/>
            <person name="Cole S.T."/>
        </authorList>
    </citation>
    <scope>NUCLEOTIDE SEQUENCE [LARGE SCALE GENOMIC DNA]</scope>
    <source>
        <strain>BCG / Pasteur 1173P2</strain>
    </source>
</reference>
<gene>
    <name evidence="1" type="primary">aroQ</name>
    <name type="ordered locus">BCG_2559c</name>
</gene>
<dbReference type="EC" id="4.2.1.10" evidence="1"/>
<dbReference type="EMBL" id="AM408590">
    <property type="protein sequence ID" value="CAL72547.1"/>
    <property type="molecule type" value="Genomic_DNA"/>
</dbReference>
<dbReference type="RefSeq" id="WP_003413001.1">
    <property type="nucleotide sequence ID" value="NC_008769.1"/>
</dbReference>
<dbReference type="SMR" id="A1KLN4"/>
<dbReference type="KEGG" id="mbb:BCG_2559c"/>
<dbReference type="HOGENOM" id="CLU_090968_1_0_11"/>
<dbReference type="UniPathway" id="UPA00053">
    <property type="reaction ID" value="UER00086"/>
</dbReference>
<dbReference type="Proteomes" id="UP000001472">
    <property type="component" value="Chromosome"/>
</dbReference>
<dbReference type="GO" id="GO:0003855">
    <property type="term" value="F:3-dehydroquinate dehydratase activity"/>
    <property type="evidence" value="ECO:0007669"/>
    <property type="project" value="UniProtKB-UniRule"/>
</dbReference>
<dbReference type="GO" id="GO:0008652">
    <property type="term" value="P:amino acid biosynthetic process"/>
    <property type="evidence" value="ECO:0007669"/>
    <property type="project" value="UniProtKB-KW"/>
</dbReference>
<dbReference type="GO" id="GO:0009073">
    <property type="term" value="P:aromatic amino acid family biosynthetic process"/>
    <property type="evidence" value="ECO:0007669"/>
    <property type="project" value="UniProtKB-KW"/>
</dbReference>
<dbReference type="GO" id="GO:0009423">
    <property type="term" value="P:chorismate biosynthetic process"/>
    <property type="evidence" value="ECO:0007669"/>
    <property type="project" value="UniProtKB-UniRule"/>
</dbReference>
<dbReference type="GO" id="GO:0019631">
    <property type="term" value="P:quinate catabolic process"/>
    <property type="evidence" value="ECO:0007669"/>
    <property type="project" value="TreeGrafter"/>
</dbReference>
<dbReference type="CDD" id="cd00466">
    <property type="entry name" value="DHQase_II"/>
    <property type="match status" value="1"/>
</dbReference>
<dbReference type="FunFam" id="3.40.50.9100:FF:000001">
    <property type="entry name" value="3-dehydroquinate dehydratase"/>
    <property type="match status" value="1"/>
</dbReference>
<dbReference type="Gene3D" id="3.40.50.9100">
    <property type="entry name" value="Dehydroquinase, class II"/>
    <property type="match status" value="1"/>
</dbReference>
<dbReference type="HAMAP" id="MF_00169">
    <property type="entry name" value="AroQ"/>
    <property type="match status" value="1"/>
</dbReference>
<dbReference type="InterPro" id="IPR001874">
    <property type="entry name" value="DHquinase_II"/>
</dbReference>
<dbReference type="InterPro" id="IPR018509">
    <property type="entry name" value="DHquinase_II_CS"/>
</dbReference>
<dbReference type="InterPro" id="IPR036441">
    <property type="entry name" value="DHquinase_II_sf"/>
</dbReference>
<dbReference type="NCBIfam" id="TIGR01088">
    <property type="entry name" value="aroQ"/>
    <property type="match status" value="1"/>
</dbReference>
<dbReference type="NCBIfam" id="NF003805">
    <property type="entry name" value="PRK05395.1-2"/>
    <property type="match status" value="1"/>
</dbReference>
<dbReference type="NCBIfam" id="NF003806">
    <property type="entry name" value="PRK05395.1-3"/>
    <property type="match status" value="1"/>
</dbReference>
<dbReference type="NCBIfam" id="NF003807">
    <property type="entry name" value="PRK05395.1-4"/>
    <property type="match status" value="1"/>
</dbReference>
<dbReference type="PANTHER" id="PTHR21272">
    <property type="entry name" value="CATABOLIC 3-DEHYDROQUINASE"/>
    <property type="match status" value="1"/>
</dbReference>
<dbReference type="PANTHER" id="PTHR21272:SF3">
    <property type="entry name" value="CATABOLIC 3-DEHYDROQUINASE"/>
    <property type="match status" value="1"/>
</dbReference>
<dbReference type="Pfam" id="PF01220">
    <property type="entry name" value="DHquinase_II"/>
    <property type="match status" value="1"/>
</dbReference>
<dbReference type="PIRSF" id="PIRSF001399">
    <property type="entry name" value="DHquinase_II"/>
    <property type="match status" value="1"/>
</dbReference>
<dbReference type="SUPFAM" id="SSF52304">
    <property type="entry name" value="Type II 3-dehydroquinate dehydratase"/>
    <property type="match status" value="1"/>
</dbReference>
<dbReference type="PROSITE" id="PS01029">
    <property type="entry name" value="DEHYDROQUINASE_II"/>
    <property type="match status" value="1"/>
</dbReference>
<keyword id="KW-0028">Amino-acid biosynthesis</keyword>
<keyword id="KW-0057">Aromatic amino acid biosynthesis</keyword>
<keyword id="KW-0456">Lyase</keyword>